<gene>
    <name evidence="1" type="primary">kdpC</name>
    <name type="ordered locus">SCH_0724</name>
</gene>
<name>KDPC_SALCH</name>
<reference key="1">
    <citation type="journal article" date="2005" name="Nucleic Acids Res.">
        <title>The genome sequence of Salmonella enterica serovar Choleraesuis, a highly invasive and resistant zoonotic pathogen.</title>
        <authorList>
            <person name="Chiu C.-H."/>
            <person name="Tang P."/>
            <person name="Chu C."/>
            <person name="Hu S."/>
            <person name="Bao Q."/>
            <person name="Yu J."/>
            <person name="Chou Y.-Y."/>
            <person name="Wang H.-S."/>
            <person name="Lee Y.-S."/>
        </authorList>
    </citation>
    <scope>NUCLEOTIDE SEQUENCE [LARGE SCALE GENOMIC DNA]</scope>
    <source>
        <strain>SC-B67</strain>
    </source>
</reference>
<dbReference type="EMBL" id="AE017220">
    <property type="protein sequence ID" value="AAX64630.1"/>
    <property type="molecule type" value="Genomic_DNA"/>
</dbReference>
<dbReference type="RefSeq" id="WP_001539480.1">
    <property type="nucleotide sequence ID" value="NC_006905.1"/>
</dbReference>
<dbReference type="SMR" id="Q57RN1"/>
<dbReference type="KEGG" id="sec:SCH_0724"/>
<dbReference type="HOGENOM" id="CLU_077094_2_0_6"/>
<dbReference type="Proteomes" id="UP000000538">
    <property type="component" value="Chromosome"/>
</dbReference>
<dbReference type="GO" id="GO:0005886">
    <property type="term" value="C:plasma membrane"/>
    <property type="evidence" value="ECO:0007669"/>
    <property type="project" value="UniProtKB-SubCell"/>
</dbReference>
<dbReference type="GO" id="GO:0005524">
    <property type="term" value="F:ATP binding"/>
    <property type="evidence" value="ECO:0007669"/>
    <property type="project" value="UniProtKB-UniRule"/>
</dbReference>
<dbReference type="GO" id="GO:0008556">
    <property type="term" value="F:P-type potassium transmembrane transporter activity"/>
    <property type="evidence" value="ECO:0007669"/>
    <property type="project" value="InterPro"/>
</dbReference>
<dbReference type="HAMAP" id="MF_00276">
    <property type="entry name" value="KdpC"/>
    <property type="match status" value="1"/>
</dbReference>
<dbReference type="InterPro" id="IPR003820">
    <property type="entry name" value="KdpC"/>
</dbReference>
<dbReference type="NCBIfam" id="TIGR00681">
    <property type="entry name" value="kdpC"/>
    <property type="match status" value="1"/>
</dbReference>
<dbReference type="NCBIfam" id="NF001454">
    <property type="entry name" value="PRK00315.1"/>
    <property type="match status" value="1"/>
</dbReference>
<dbReference type="PANTHER" id="PTHR30042">
    <property type="entry name" value="POTASSIUM-TRANSPORTING ATPASE C CHAIN"/>
    <property type="match status" value="1"/>
</dbReference>
<dbReference type="PANTHER" id="PTHR30042:SF2">
    <property type="entry name" value="POTASSIUM-TRANSPORTING ATPASE KDPC SUBUNIT"/>
    <property type="match status" value="1"/>
</dbReference>
<dbReference type="Pfam" id="PF02669">
    <property type="entry name" value="KdpC"/>
    <property type="match status" value="1"/>
</dbReference>
<dbReference type="PIRSF" id="PIRSF001296">
    <property type="entry name" value="K_ATPase_KdpC"/>
    <property type="match status" value="1"/>
</dbReference>
<feature type="chain" id="PRO_1000022312" description="Potassium-transporting ATPase KdpC subunit">
    <location>
        <begin position="1"/>
        <end position="194"/>
    </location>
</feature>
<feature type="transmembrane region" description="Helical" evidence="1">
    <location>
        <begin position="12"/>
        <end position="34"/>
    </location>
</feature>
<accession>Q57RN1</accession>
<protein>
    <recommendedName>
        <fullName evidence="1">Potassium-transporting ATPase KdpC subunit</fullName>
    </recommendedName>
    <alternativeName>
        <fullName evidence="1">ATP phosphohydrolase [potassium-transporting] C chain</fullName>
    </alternativeName>
    <alternativeName>
        <fullName evidence="1">Potassium-binding and translocating subunit C</fullName>
    </alternativeName>
    <alternativeName>
        <fullName evidence="1">Potassium-translocating ATPase C chain</fullName>
    </alternativeName>
</protein>
<organism>
    <name type="scientific">Salmonella choleraesuis (strain SC-B67)</name>
    <dbReference type="NCBI Taxonomy" id="321314"/>
    <lineage>
        <taxon>Bacteria</taxon>
        <taxon>Pseudomonadati</taxon>
        <taxon>Pseudomonadota</taxon>
        <taxon>Gammaproteobacteria</taxon>
        <taxon>Enterobacterales</taxon>
        <taxon>Enterobacteriaceae</taxon>
        <taxon>Salmonella</taxon>
    </lineage>
</organism>
<proteinExistence type="inferred from homology"/>
<comment type="function">
    <text evidence="1">Part of the high-affinity ATP-driven potassium transport (or Kdp) system, which catalyzes the hydrolysis of ATP coupled with the electrogenic transport of potassium into the cytoplasm. This subunit acts as a catalytic chaperone that increases the ATP-binding affinity of the ATP-hydrolyzing subunit KdpB by the formation of a transient KdpB/KdpC/ATP ternary complex.</text>
</comment>
<comment type="subunit">
    <text evidence="1">The system is composed of three essential subunits: KdpA, KdpB and KdpC.</text>
</comment>
<comment type="subcellular location">
    <subcellularLocation>
        <location evidence="1">Cell inner membrane</location>
        <topology evidence="1">Single-pass membrane protein</topology>
    </subcellularLocation>
</comment>
<comment type="similarity">
    <text evidence="1">Belongs to the KdpC family.</text>
</comment>
<evidence type="ECO:0000255" key="1">
    <source>
        <dbReference type="HAMAP-Rule" id="MF_00276"/>
    </source>
</evidence>
<sequence length="194" mass="20469">MIGLRPAFSTMLFLLLLTGGVYPLLTTALGQWWFPWQANGSLIHKDNVIRGSALIGQSFTAAGYFHGRPSATADTPYNPLASGGSNLAASNPELDAQIQARVAALRAANPQASSAVPVELTTASASGLDNNLTPGAAAWQIPRVAAARQLPVEQVAQLVAEYTHRPLARFLGQPVVNIVELNLALDALQGHRAK</sequence>
<keyword id="KW-0067">ATP-binding</keyword>
<keyword id="KW-0997">Cell inner membrane</keyword>
<keyword id="KW-1003">Cell membrane</keyword>
<keyword id="KW-0406">Ion transport</keyword>
<keyword id="KW-0472">Membrane</keyword>
<keyword id="KW-0547">Nucleotide-binding</keyword>
<keyword id="KW-0630">Potassium</keyword>
<keyword id="KW-0633">Potassium transport</keyword>
<keyword id="KW-0812">Transmembrane</keyword>
<keyword id="KW-1133">Transmembrane helix</keyword>
<keyword id="KW-0813">Transport</keyword>